<sequence length="344" mass="39231">MITQRQKDILNLIVELFTKTHEPIGSKTLQNSIASSSATIRNDMAALEKLGLLEKAHTSSGRLPSQEGFRYFVEHSLNPDSLDEQDVYQVIKAFDFEAFRLGDLLQRASDVLANLTGYTALILDVEPKKQRLTTFDIVKLSNHDALAVLTLDEASPVTVQFAIPKNFLDSDLMTVAKIARERFLNQTVLDIHYRLRTELPQIIQKYFPRTDNVLDLFDHIFNPIFQEEVFISGKIKTLEFAGLNTYQFLENLQSVALEIRQSLPEDELHRVQVADSKEKSLADLTVISQKFLIPYRGFGILTVIGPVDLDYQRTISLINVISRVLAVKLGDFYRYLNSNHYEVH</sequence>
<protein>
    <recommendedName>
        <fullName evidence="1">Heat-inducible transcription repressor HrcA</fullName>
    </recommendedName>
</protein>
<dbReference type="EMBL" id="U78296">
    <property type="protein sequence ID" value="AAC45610.1"/>
    <property type="molecule type" value="Genomic_DNA"/>
</dbReference>
<dbReference type="EMBL" id="AE014133">
    <property type="protein sequence ID" value="AAN57865.1"/>
    <property type="molecule type" value="Genomic_DNA"/>
</dbReference>
<dbReference type="RefSeq" id="NP_720559.1">
    <property type="nucleotide sequence ID" value="NC_004350.2"/>
</dbReference>
<dbReference type="RefSeq" id="WP_002263415.1">
    <property type="nucleotide sequence ID" value="NC_004350.2"/>
</dbReference>
<dbReference type="SMR" id="O06940"/>
<dbReference type="STRING" id="210007.SMU_80"/>
<dbReference type="KEGG" id="smu:SMU_80"/>
<dbReference type="PATRIC" id="fig|210007.7.peg.69"/>
<dbReference type="eggNOG" id="COG1420">
    <property type="taxonomic scope" value="Bacteria"/>
</dbReference>
<dbReference type="HOGENOM" id="CLU_050019_1_0_9"/>
<dbReference type="OrthoDB" id="9783139at2"/>
<dbReference type="PhylomeDB" id="O06940"/>
<dbReference type="Proteomes" id="UP000002512">
    <property type="component" value="Chromosome"/>
</dbReference>
<dbReference type="GO" id="GO:0003677">
    <property type="term" value="F:DNA binding"/>
    <property type="evidence" value="ECO:0007669"/>
    <property type="project" value="InterPro"/>
</dbReference>
<dbReference type="GO" id="GO:0045892">
    <property type="term" value="P:negative regulation of DNA-templated transcription"/>
    <property type="evidence" value="ECO:0007669"/>
    <property type="project" value="UniProtKB-UniRule"/>
</dbReference>
<dbReference type="Gene3D" id="3.30.450.40">
    <property type="match status" value="1"/>
</dbReference>
<dbReference type="Gene3D" id="3.30.390.60">
    <property type="entry name" value="Heat-inducible transcription repressor hrca homolog, domain 3"/>
    <property type="match status" value="1"/>
</dbReference>
<dbReference type="Gene3D" id="1.10.10.10">
    <property type="entry name" value="Winged helix-like DNA-binding domain superfamily/Winged helix DNA-binding domain"/>
    <property type="match status" value="1"/>
</dbReference>
<dbReference type="HAMAP" id="MF_00081">
    <property type="entry name" value="HrcA"/>
    <property type="match status" value="1"/>
</dbReference>
<dbReference type="InterPro" id="IPR029016">
    <property type="entry name" value="GAF-like_dom_sf"/>
</dbReference>
<dbReference type="InterPro" id="IPR002571">
    <property type="entry name" value="HrcA"/>
</dbReference>
<dbReference type="InterPro" id="IPR021153">
    <property type="entry name" value="HrcA_C"/>
</dbReference>
<dbReference type="InterPro" id="IPR036388">
    <property type="entry name" value="WH-like_DNA-bd_sf"/>
</dbReference>
<dbReference type="InterPro" id="IPR036390">
    <property type="entry name" value="WH_DNA-bd_sf"/>
</dbReference>
<dbReference type="InterPro" id="IPR005104">
    <property type="entry name" value="WHTH_HrcA_DNA-bd"/>
</dbReference>
<dbReference type="InterPro" id="IPR023120">
    <property type="entry name" value="WHTH_transcript_rep_HrcA_IDD"/>
</dbReference>
<dbReference type="NCBIfam" id="TIGR00331">
    <property type="entry name" value="hrcA"/>
    <property type="match status" value="1"/>
</dbReference>
<dbReference type="PANTHER" id="PTHR34824">
    <property type="entry name" value="HEAT-INDUCIBLE TRANSCRIPTION REPRESSOR HRCA"/>
    <property type="match status" value="1"/>
</dbReference>
<dbReference type="PANTHER" id="PTHR34824:SF1">
    <property type="entry name" value="HEAT-INDUCIBLE TRANSCRIPTION REPRESSOR HRCA"/>
    <property type="match status" value="1"/>
</dbReference>
<dbReference type="Pfam" id="PF01628">
    <property type="entry name" value="HrcA"/>
    <property type="match status" value="1"/>
</dbReference>
<dbReference type="Pfam" id="PF03444">
    <property type="entry name" value="HrcA_DNA-bdg"/>
    <property type="match status" value="1"/>
</dbReference>
<dbReference type="PIRSF" id="PIRSF005485">
    <property type="entry name" value="HrcA"/>
    <property type="match status" value="1"/>
</dbReference>
<dbReference type="SUPFAM" id="SSF55781">
    <property type="entry name" value="GAF domain-like"/>
    <property type="match status" value="1"/>
</dbReference>
<dbReference type="SUPFAM" id="SSF46785">
    <property type="entry name" value="Winged helix' DNA-binding domain"/>
    <property type="match status" value="1"/>
</dbReference>
<name>HRCA_STRMU</name>
<organism>
    <name type="scientific">Streptococcus mutans serotype c (strain ATCC 700610 / UA159)</name>
    <dbReference type="NCBI Taxonomy" id="210007"/>
    <lineage>
        <taxon>Bacteria</taxon>
        <taxon>Bacillati</taxon>
        <taxon>Bacillota</taxon>
        <taxon>Bacilli</taxon>
        <taxon>Lactobacillales</taxon>
        <taxon>Streptococcaceae</taxon>
        <taxon>Streptococcus</taxon>
    </lineage>
</organism>
<accession>O06940</accession>
<proteinExistence type="inferred from homology"/>
<feature type="chain" id="PRO_0000182539" description="Heat-inducible transcription repressor HrcA">
    <location>
        <begin position="1"/>
        <end position="344"/>
    </location>
</feature>
<feature type="sequence conflict" description="In Ref. 1; AAC45610." evidence="2" ref="1">
    <original>S</original>
    <variation>R</variation>
    <location>
        <position position="37"/>
    </location>
</feature>
<feature type="sequence conflict" description="In Ref. 1." evidence="2" ref="1">
    <original>HTSSGRLPSQEGF</original>
    <variation>TTPPAVVCPVKKAI</variation>
    <location>
        <begin position="57"/>
        <end position="69"/>
    </location>
</feature>
<feature type="sequence conflict" description="In Ref. 1; AAC45610." evidence="2" ref="1">
    <original>L</original>
    <variation>P</variation>
    <location>
        <position position="199"/>
    </location>
</feature>
<feature type="sequence conflict" description="In Ref. 1; AAC45610." evidence="2" ref="1">
    <original>N</original>
    <variation>D</variation>
    <location>
        <position position="244"/>
    </location>
</feature>
<reference key="1">
    <citation type="journal article" date="1997" name="Mol. Microbiol.">
        <title>Transcriptional analysis of the Streptococcus mutans hrcA, grpE and dnaK genes and regulation of expression in response to heat shock and environmental acidification.</title>
        <authorList>
            <person name="Jayaraman G.C."/>
            <person name="Penders J.E."/>
            <person name="Burne R.A."/>
        </authorList>
    </citation>
    <scope>NUCLEOTIDE SEQUENCE [GENOMIC DNA]</scope>
    <source>
        <strain>GS-5</strain>
    </source>
</reference>
<reference key="2">
    <citation type="journal article" date="2002" name="Proc. Natl. Acad. Sci. U.S.A.">
        <title>Genome sequence of Streptococcus mutans UA159, a cariogenic dental pathogen.</title>
        <authorList>
            <person name="Ajdic D.J."/>
            <person name="McShan W.M."/>
            <person name="McLaughlin R.E."/>
            <person name="Savic G."/>
            <person name="Chang J."/>
            <person name="Carson M.B."/>
            <person name="Primeaux C."/>
            <person name="Tian R."/>
            <person name="Kenton S."/>
            <person name="Jia H.G."/>
            <person name="Lin S.P."/>
            <person name="Qian Y."/>
            <person name="Li S."/>
            <person name="Zhu H."/>
            <person name="Najar F.Z."/>
            <person name="Lai H."/>
            <person name="White J."/>
            <person name="Roe B.A."/>
            <person name="Ferretti J.J."/>
        </authorList>
    </citation>
    <scope>NUCLEOTIDE SEQUENCE [LARGE SCALE GENOMIC DNA]</scope>
    <source>
        <strain>ATCC 700610 / UA159</strain>
    </source>
</reference>
<evidence type="ECO:0000255" key="1">
    <source>
        <dbReference type="HAMAP-Rule" id="MF_00081"/>
    </source>
</evidence>
<evidence type="ECO:0000305" key="2"/>
<comment type="function">
    <text evidence="1">Negative regulator of class I heat shock genes (grpE-dnaK-dnaJ and groELS operons). Prevents heat-shock induction of these operons.</text>
</comment>
<comment type="similarity">
    <text evidence="1">Belongs to the HrcA family.</text>
</comment>
<keyword id="KW-1185">Reference proteome</keyword>
<keyword id="KW-0678">Repressor</keyword>
<keyword id="KW-0346">Stress response</keyword>
<keyword id="KW-0804">Transcription</keyword>
<keyword id="KW-0805">Transcription regulation</keyword>
<gene>
    <name evidence="1" type="primary">hrcA</name>
    <name type="ordered locus">SMU_80</name>
</gene>